<evidence type="ECO:0000255" key="1">
    <source>
        <dbReference type="HAMAP-Rule" id="MF_02042"/>
    </source>
</evidence>
<evidence type="ECO:0000305" key="2"/>
<proteinExistence type="inferred from homology"/>
<feature type="chain" id="PRO_0000162096" description="tRNA-dihydrouridine synthase B">
    <location>
        <begin position="1"/>
        <end position="321"/>
    </location>
</feature>
<feature type="active site" description="Proton donor" evidence="1">
    <location>
        <position position="100"/>
    </location>
</feature>
<feature type="binding site" evidence="1">
    <location>
        <begin position="16"/>
        <end position="18"/>
    </location>
    <ligand>
        <name>FMN</name>
        <dbReference type="ChEBI" id="CHEBI:58210"/>
    </ligand>
</feature>
<feature type="binding site" evidence="1">
    <location>
        <position position="70"/>
    </location>
    <ligand>
        <name>FMN</name>
        <dbReference type="ChEBI" id="CHEBI:58210"/>
    </ligand>
</feature>
<feature type="binding site" evidence="1">
    <location>
        <position position="139"/>
    </location>
    <ligand>
        <name>FMN</name>
        <dbReference type="ChEBI" id="CHEBI:58210"/>
    </ligand>
</feature>
<feature type="binding site" evidence="1">
    <location>
        <begin position="200"/>
        <end position="202"/>
    </location>
    <ligand>
        <name>FMN</name>
        <dbReference type="ChEBI" id="CHEBI:58210"/>
    </ligand>
</feature>
<feature type="binding site" evidence="1">
    <location>
        <begin position="224"/>
        <end position="225"/>
    </location>
    <ligand>
        <name>FMN</name>
        <dbReference type="ChEBI" id="CHEBI:58210"/>
    </ligand>
</feature>
<comment type="function">
    <text evidence="1">Catalyzes the synthesis of 5,6-dihydrouridine (D), a modified base found in the D-loop of most tRNAs, via the reduction of the C5-C6 double bond in target uridines.</text>
</comment>
<comment type="catalytic activity">
    <reaction evidence="1">
        <text>a 5,6-dihydrouridine in tRNA + NAD(+) = a uridine in tRNA + NADH + H(+)</text>
        <dbReference type="Rhea" id="RHEA:54452"/>
        <dbReference type="Rhea" id="RHEA-COMP:13339"/>
        <dbReference type="Rhea" id="RHEA-COMP:13887"/>
        <dbReference type="ChEBI" id="CHEBI:15378"/>
        <dbReference type="ChEBI" id="CHEBI:57540"/>
        <dbReference type="ChEBI" id="CHEBI:57945"/>
        <dbReference type="ChEBI" id="CHEBI:65315"/>
        <dbReference type="ChEBI" id="CHEBI:74443"/>
    </reaction>
</comment>
<comment type="catalytic activity">
    <reaction evidence="1">
        <text>a 5,6-dihydrouridine in tRNA + NADP(+) = a uridine in tRNA + NADPH + H(+)</text>
        <dbReference type="Rhea" id="RHEA:23624"/>
        <dbReference type="Rhea" id="RHEA-COMP:13339"/>
        <dbReference type="Rhea" id="RHEA-COMP:13887"/>
        <dbReference type="ChEBI" id="CHEBI:15378"/>
        <dbReference type="ChEBI" id="CHEBI:57783"/>
        <dbReference type="ChEBI" id="CHEBI:58349"/>
        <dbReference type="ChEBI" id="CHEBI:65315"/>
        <dbReference type="ChEBI" id="CHEBI:74443"/>
    </reaction>
</comment>
<comment type="cofactor">
    <cofactor evidence="1">
        <name>FMN</name>
        <dbReference type="ChEBI" id="CHEBI:58210"/>
    </cofactor>
</comment>
<comment type="similarity">
    <text evidence="1">Belongs to the Dus family. DusB subfamily.</text>
</comment>
<comment type="sequence caution" evidence="2">
    <conflict type="erroneous initiation">
        <sequence resource="EMBL-CDS" id="AAO70834"/>
    </conflict>
</comment>
<comment type="sequence caution" evidence="2">
    <conflict type="erroneous initiation">
        <sequence resource="EMBL-CDS" id="CAD07899"/>
    </conflict>
</comment>
<accession>P0A2R7</accession>
<accession>P37405</accession>
<accession>Q8Z3D1</accession>
<sequence>MRIGQYQLRNRLIAAPMAGITDRPFRTLCYEMGAGLTVSEMMSSNPQVWESDKSRLRMVHVDEPGIRTVQIAGSDPVEMADAARINVESGAQIIDINMGCPAKKVNRKLAGSALLQYPDLVKSILIGVVNAVDVPVTLKIRTGWAPEHRNCVEIAQLAEDCGIQALTIHGRTRACLFNGEAEYDSIRAVKQKVSIPIIANGDITNPHKARAVLDYTGADALMIGRAAQGRPWIFREIQHYLDTGELLPPLPLAEVKRLLCTHVRELHDFYGQAKGYRIARKHVSWYLQEHAPDDQFRRTFNAIEDASEQLEALEAYFENFA</sequence>
<gene>
    <name evidence="1" type="primary">dusB</name>
    <name type="ordered locus">STY3564</name>
    <name type="ordered locus">t3299</name>
</gene>
<protein>
    <recommendedName>
        <fullName evidence="1">tRNA-dihydrouridine synthase B</fullName>
        <ecNumber evidence="1">1.3.1.-</ecNumber>
    </recommendedName>
</protein>
<name>DUSB_SALTI</name>
<keyword id="KW-0285">Flavoprotein</keyword>
<keyword id="KW-0288">FMN</keyword>
<keyword id="KW-0521">NADP</keyword>
<keyword id="KW-0560">Oxidoreductase</keyword>
<keyword id="KW-0694">RNA-binding</keyword>
<keyword id="KW-0819">tRNA processing</keyword>
<keyword id="KW-0820">tRNA-binding</keyword>
<organism>
    <name type="scientific">Salmonella typhi</name>
    <dbReference type="NCBI Taxonomy" id="90370"/>
    <lineage>
        <taxon>Bacteria</taxon>
        <taxon>Pseudomonadati</taxon>
        <taxon>Pseudomonadota</taxon>
        <taxon>Gammaproteobacteria</taxon>
        <taxon>Enterobacterales</taxon>
        <taxon>Enterobacteriaceae</taxon>
        <taxon>Salmonella</taxon>
    </lineage>
</organism>
<reference key="1">
    <citation type="journal article" date="2001" name="Nature">
        <title>Complete genome sequence of a multiple drug resistant Salmonella enterica serovar Typhi CT18.</title>
        <authorList>
            <person name="Parkhill J."/>
            <person name="Dougan G."/>
            <person name="James K.D."/>
            <person name="Thomson N.R."/>
            <person name="Pickard D."/>
            <person name="Wain J."/>
            <person name="Churcher C.M."/>
            <person name="Mungall K.L."/>
            <person name="Bentley S.D."/>
            <person name="Holden M.T.G."/>
            <person name="Sebaihia M."/>
            <person name="Baker S."/>
            <person name="Basham D."/>
            <person name="Brooks K."/>
            <person name="Chillingworth T."/>
            <person name="Connerton P."/>
            <person name="Cronin A."/>
            <person name="Davis P."/>
            <person name="Davies R.M."/>
            <person name="Dowd L."/>
            <person name="White N."/>
            <person name="Farrar J."/>
            <person name="Feltwell T."/>
            <person name="Hamlin N."/>
            <person name="Haque A."/>
            <person name="Hien T.T."/>
            <person name="Holroyd S."/>
            <person name="Jagels K."/>
            <person name="Krogh A."/>
            <person name="Larsen T.S."/>
            <person name="Leather S."/>
            <person name="Moule S."/>
            <person name="O'Gaora P."/>
            <person name="Parry C."/>
            <person name="Quail M.A."/>
            <person name="Rutherford K.M."/>
            <person name="Simmonds M."/>
            <person name="Skelton J."/>
            <person name="Stevens K."/>
            <person name="Whitehead S."/>
            <person name="Barrell B.G."/>
        </authorList>
    </citation>
    <scope>NUCLEOTIDE SEQUENCE [LARGE SCALE GENOMIC DNA]</scope>
    <source>
        <strain>CT18</strain>
    </source>
</reference>
<reference key="2">
    <citation type="journal article" date="2003" name="J. Bacteriol.">
        <title>Comparative genomics of Salmonella enterica serovar Typhi strains Ty2 and CT18.</title>
        <authorList>
            <person name="Deng W."/>
            <person name="Liou S.-R."/>
            <person name="Plunkett G. III"/>
            <person name="Mayhew G.F."/>
            <person name="Rose D.J."/>
            <person name="Burland V."/>
            <person name="Kodoyianni V."/>
            <person name="Schwartz D.C."/>
            <person name="Blattner F.R."/>
        </authorList>
    </citation>
    <scope>NUCLEOTIDE SEQUENCE [LARGE SCALE GENOMIC DNA]</scope>
    <source>
        <strain>ATCC 700931 / Ty2</strain>
    </source>
</reference>
<dbReference type="EC" id="1.3.1.-" evidence="1"/>
<dbReference type="EMBL" id="AL513382">
    <property type="protein sequence ID" value="CAD07899.1"/>
    <property type="status" value="ALT_INIT"/>
    <property type="molecule type" value="Genomic_DNA"/>
</dbReference>
<dbReference type="EMBL" id="AE014613">
    <property type="protein sequence ID" value="AAO70834.1"/>
    <property type="status" value="ALT_INIT"/>
    <property type="molecule type" value="Genomic_DNA"/>
</dbReference>
<dbReference type="RefSeq" id="NP_457760.1">
    <property type="nucleotide sequence ID" value="NC_003198.1"/>
</dbReference>
<dbReference type="RefSeq" id="WP_001219664.1">
    <property type="nucleotide sequence ID" value="NZ_WSUR01000038.1"/>
</dbReference>
<dbReference type="SMR" id="P0A2R7"/>
<dbReference type="STRING" id="220341.gene:17587412"/>
<dbReference type="KEGG" id="stt:t3299"/>
<dbReference type="KEGG" id="sty:STY3564"/>
<dbReference type="PATRIC" id="fig|220341.7.peg.3629"/>
<dbReference type="eggNOG" id="COG0042">
    <property type="taxonomic scope" value="Bacteria"/>
</dbReference>
<dbReference type="HOGENOM" id="CLU_013299_0_1_6"/>
<dbReference type="OMA" id="QRPHHDI"/>
<dbReference type="OrthoDB" id="9764501at2"/>
<dbReference type="Proteomes" id="UP000000541">
    <property type="component" value="Chromosome"/>
</dbReference>
<dbReference type="Proteomes" id="UP000002670">
    <property type="component" value="Chromosome"/>
</dbReference>
<dbReference type="GO" id="GO:0050660">
    <property type="term" value="F:flavin adenine dinucleotide binding"/>
    <property type="evidence" value="ECO:0007669"/>
    <property type="project" value="InterPro"/>
</dbReference>
<dbReference type="GO" id="GO:0010181">
    <property type="term" value="F:FMN binding"/>
    <property type="evidence" value="ECO:0007669"/>
    <property type="project" value="UniProtKB-UniRule"/>
</dbReference>
<dbReference type="GO" id="GO:0000049">
    <property type="term" value="F:tRNA binding"/>
    <property type="evidence" value="ECO:0007669"/>
    <property type="project" value="UniProtKB-UniRule"/>
</dbReference>
<dbReference type="GO" id="GO:0017150">
    <property type="term" value="F:tRNA dihydrouridine synthase activity"/>
    <property type="evidence" value="ECO:0007669"/>
    <property type="project" value="UniProtKB-UniRule"/>
</dbReference>
<dbReference type="CDD" id="cd02801">
    <property type="entry name" value="DUS_like_FMN"/>
    <property type="match status" value="1"/>
</dbReference>
<dbReference type="FunFam" id="1.10.1200.80:FF:000001">
    <property type="entry name" value="tRNA-dihydrouridine synthase B"/>
    <property type="match status" value="1"/>
</dbReference>
<dbReference type="FunFam" id="3.20.20.70:FF:000051">
    <property type="entry name" value="tRNA-dihydrouridine synthase B"/>
    <property type="match status" value="1"/>
</dbReference>
<dbReference type="Gene3D" id="3.20.20.70">
    <property type="entry name" value="Aldolase class I"/>
    <property type="match status" value="1"/>
</dbReference>
<dbReference type="Gene3D" id="1.10.1200.80">
    <property type="entry name" value="Putative flavin oxidoreducatase, domain 2"/>
    <property type="match status" value="1"/>
</dbReference>
<dbReference type="HAMAP" id="MF_02042">
    <property type="entry name" value="DusB_subfam"/>
    <property type="match status" value="1"/>
</dbReference>
<dbReference type="InterPro" id="IPR013785">
    <property type="entry name" value="Aldolase_TIM"/>
</dbReference>
<dbReference type="InterPro" id="IPR035587">
    <property type="entry name" value="DUS-like_FMN-bd"/>
</dbReference>
<dbReference type="InterPro" id="IPR001269">
    <property type="entry name" value="DUS_fam"/>
</dbReference>
<dbReference type="InterPro" id="IPR032887">
    <property type="entry name" value="DusB"/>
</dbReference>
<dbReference type="InterPro" id="IPR004652">
    <property type="entry name" value="DusB-like"/>
</dbReference>
<dbReference type="InterPro" id="IPR024036">
    <property type="entry name" value="tRNA-dHydroUridine_Synthase_C"/>
</dbReference>
<dbReference type="InterPro" id="IPR018517">
    <property type="entry name" value="tRNA_hU_synthase_CS"/>
</dbReference>
<dbReference type="NCBIfam" id="TIGR00737">
    <property type="entry name" value="nifR3_yhdG"/>
    <property type="match status" value="1"/>
</dbReference>
<dbReference type="PANTHER" id="PTHR45846">
    <property type="entry name" value="TRNA-DIHYDROURIDINE(47) SYNTHASE [NAD(P)(+)]-LIKE"/>
    <property type="match status" value="1"/>
</dbReference>
<dbReference type="PANTHER" id="PTHR45846:SF1">
    <property type="entry name" value="TRNA-DIHYDROURIDINE(47) SYNTHASE [NAD(P)(+)]-LIKE"/>
    <property type="match status" value="1"/>
</dbReference>
<dbReference type="Pfam" id="PF01207">
    <property type="entry name" value="Dus"/>
    <property type="match status" value="1"/>
</dbReference>
<dbReference type="PIRSF" id="PIRSF006621">
    <property type="entry name" value="Dus"/>
    <property type="match status" value="1"/>
</dbReference>
<dbReference type="SUPFAM" id="SSF51395">
    <property type="entry name" value="FMN-linked oxidoreductases"/>
    <property type="match status" value="1"/>
</dbReference>
<dbReference type="PROSITE" id="PS01136">
    <property type="entry name" value="UPF0034"/>
    <property type="match status" value="1"/>
</dbReference>